<dbReference type="EMBL" id="CP000252">
    <property type="protein sequence ID" value="ABC76194.1"/>
    <property type="molecule type" value="Genomic_DNA"/>
</dbReference>
<dbReference type="RefSeq" id="WP_011416228.1">
    <property type="nucleotide sequence ID" value="NC_007759.1"/>
</dbReference>
<dbReference type="SMR" id="Q2LQA7"/>
<dbReference type="STRING" id="56780.SYN_03315"/>
<dbReference type="KEGG" id="sat:SYN_03315"/>
<dbReference type="eggNOG" id="COG0199">
    <property type="taxonomic scope" value="Bacteria"/>
</dbReference>
<dbReference type="HOGENOM" id="CLU_139869_3_0_7"/>
<dbReference type="InParanoid" id="Q2LQA7"/>
<dbReference type="OrthoDB" id="9810484at2"/>
<dbReference type="Proteomes" id="UP000001933">
    <property type="component" value="Chromosome"/>
</dbReference>
<dbReference type="GO" id="GO:0005737">
    <property type="term" value="C:cytoplasm"/>
    <property type="evidence" value="ECO:0007669"/>
    <property type="project" value="UniProtKB-ARBA"/>
</dbReference>
<dbReference type="GO" id="GO:0015935">
    <property type="term" value="C:small ribosomal subunit"/>
    <property type="evidence" value="ECO:0007669"/>
    <property type="project" value="TreeGrafter"/>
</dbReference>
<dbReference type="GO" id="GO:0019843">
    <property type="term" value="F:rRNA binding"/>
    <property type="evidence" value="ECO:0007669"/>
    <property type="project" value="UniProtKB-UniRule"/>
</dbReference>
<dbReference type="GO" id="GO:0003735">
    <property type="term" value="F:structural constituent of ribosome"/>
    <property type="evidence" value="ECO:0007669"/>
    <property type="project" value="InterPro"/>
</dbReference>
<dbReference type="GO" id="GO:0008270">
    <property type="term" value="F:zinc ion binding"/>
    <property type="evidence" value="ECO:0007669"/>
    <property type="project" value="UniProtKB-UniRule"/>
</dbReference>
<dbReference type="GO" id="GO:0006412">
    <property type="term" value="P:translation"/>
    <property type="evidence" value="ECO:0007669"/>
    <property type="project" value="UniProtKB-UniRule"/>
</dbReference>
<dbReference type="FunFam" id="4.10.830.10:FF:000001">
    <property type="entry name" value="30S ribosomal protein S14 type Z"/>
    <property type="match status" value="1"/>
</dbReference>
<dbReference type="Gene3D" id="4.10.830.10">
    <property type="entry name" value="30s Ribosomal Protein S14, Chain N"/>
    <property type="match status" value="1"/>
</dbReference>
<dbReference type="HAMAP" id="MF_01364_B">
    <property type="entry name" value="Ribosomal_uS14_2_B"/>
    <property type="match status" value="1"/>
</dbReference>
<dbReference type="InterPro" id="IPR001209">
    <property type="entry name" value="Ribosomal_uS14"/>
</dbReference>
<dbReference type="InterPro" id="IPR023053">
    <property type="entry name" value="Ribosomal_uS14_bact"/>
</dbReference>
<dbReference type="InterPro" id="IPR018271">
    <property type="entry name" value="Ribosomal_uS14_CS"/>
</dbReference>
<dbReference type="InterPro" id="IPR043140">
    <property type="entry name" value="Ribosomal_uS14_sf"/>
</dbReference>
<dbReference type="NCBIfam" id="NF005974">
    <property type="entry name" value="PRK08061.1"/>
    <property type="match status" value="1"/>
</dbReference>
<dbReference type="PANTHER" id="PTHR19836">
    <property type="entry name" value="30S RIBOSOMAL PROTEIN S14"/>
    <property type="match status" value="1"/>
</dbReference>
<dbReference type="PANTHER" id="PTHR19836:SF19">
    <property type="entry name" value="SMALL RIBOSOMAL SUBUNIT PROTEIN US14M"/>
    <property type="match status" value="1"/>
</dbReference>
<dbReference type="Pfam" id="PF00253">
    <property type="entry name" value="Ribosomal_S14"/>
    <property type="match status" value="1"/>
</dbReference>
<dbReference type="SUPFAM" id="SSF57716">
    <property type="entry name" value="Glucocorticoid receptor-like (DNA-binding domain)"/>
    <property type="match status" value="1"/>
</dbReference>
<dbReference type="PROSITE" id="PS00527">
    <property type="entry name" value="RIBOSOMAL_S14"/>
    <property type="match status" value="1"/>
</dbReference>
<sequence>MAKKSLIAKAKREQKYSVRTYNRCSICGRPRAYYRKFGMCRICLRKLSSKGEIPGVIKSSW</sequence>
<keyword id="KW-0479">Metal-binding</keyword>
<keyword id="KW-1185">Reference proteome</keyword>
<keyword id="KW-0687">Ribonucleoprotein</keyword>
<keyword id="KW-0689">Ribosomal protein</keyword>
<keyword id="KW-0694">RNA-binding</keyword>
<keyword id="KW-0699">rRNA-binding</keyword>
<keyword id="KW-0862">Zinc</keyword>
<gene>
    <name evidence="1" type="primary">rpsZ</name>
    <name evidence="1" type="synonym">rpsN</name>
    <name type="ordered locus">SYNAS_03150</name>
    <name type="ORF">SYN_03315</name>
</gene>
<name>RS14Z_SYNAS</name>
<proteinExistence type="inferred from homology"/>
<reference key="1">
    <citation type="journal article" date="2007" name="Proc. Natl. Acad. Sci. U.S.A.">
        <title>The genome of Syntrophus aciditrophicus: life at the thermodynamic limit of microbial growth.</title>
        <authorList>
            <person name="McInerney M.J."/>
            <person name="Rohlin L."/>
            <person name="Mouttaki H."/>
            <person name="Kim U."/>
            <person name="Krupp R.S."/>
            <person name="Rios-Hernandez L."/>
            <person name="Sieber J."/>
            <person name="Struchtemeyer C.G."/>
            <person name="Bhattacharyya A."/>
            <person name="Campbell J.W."/>
            <person name="Gunsalus R.P."/>
        </authorList>
    </citation>
    <scope>NUCLEOTIDE SEQUENCE [LARGE SCALE GENOMIC DNA]</scope>
    <source>
        <strain>SB</strain>
    </source>
</reference>
<comment type="function">
    <text evidence="1">Binds 16S rRNA, required for the assembly of 30S particles and may also be responsible for determining the conformation of the 16S rRNA at the A site.</text>
</comment>
<comment type="cofactor">
    <cofactor evidence="1">
        <name>Zn(2+)</name>
        <dbReference type="ChEBI" id="CHEBI:29105"/>
    </cofactor>
    <text evidence="1">Binds 1 zinc ion per subunit.</text>
</comment>
<comment type="subunit">
    <text evidence="1">Part of the 30S ribosomal subunit. Contacts proteins S3 and S10.</text>
</comment>
<comment type="similarity">
    <text evidence="1">Belongs to the universal ribosomal protein uS14 family. Zinc-binding uS14 subfamily.</text>
</comment>
<organism>
    <name type="scientific">Syntrophus aciditrophicus (strain SB)</name>
    <dbReference type="NCBI Taxonomy" id="56780"/>
    <lineage>
        <taxon>Bacteria</taxon>
        <taxon>Pseudomonadati</taxon>
        <taxon>Thermodesulfobacteriota</taxon>
        <taxon>Syntrophia</taxon>
        <taxon>Syntrophales</taxon>
        <taxon>Syntrophaceae</taxon>
        <taxon>Syntrophus</taxon>
    </lineage>
</organism>
<accession>Q2LQA7</accession>
<evidence type="ECO:0000255" key="1">
    <source>
        <dbReference type="HAMAP-Rule" id="MF_01364"/>
    </source>
</evidence>
<evidence type="ECO:0000305" key="2"/>
<feature type="chain" id="PRO_0000269152" description="Small ribosomal subunit protein uS14">
    <location>
        <begin position="1"/>
        <end position="61"/>
    </location>
</feature>
<feature type="binding site" evidence="1">
    <location>
        <position position="24"/>
    </location>
    <ligand>
        <name>Zn(2+)</name>
        <dbReference type="ChEBI" id="CHEBI:29105"/>
    </ligand>
</feature>
<feature type="binding site" evidence="1">
    <location>
        <position position="27"/>
    </location>
    <ligand>
        <name>Zn(2+)</name>
        <dbReference type="ChEBI" id="CHEBI:29105"/>
    </ligand>
</feature>
<feature type="binding site" evidence="1">
    <location>
        <position position="40"/>
    </location>
    <ligand>
        <name>Zn(2+)</name>
        <dbReference type="ChEBI" id="CHEBI:29105"/>
    </ligand>
</feature>
<feature type="binding site" evidence="1">
    <location>
        <position position="43"/>
    </location>
    <ligand>
        <name>Zn(2+)</name>
        <dbReference type="ChEBI" id="CHEBI:29105"/>
    </ligand>
</feature>
<protein>
    <recommendedName>
        <fullName evidence="1">Small ribosomal subunit protein uS14</fullName>
    </recommendedName>
    <alternativeName>
        <fullName evidence="2">30S ribosomal protein S14 type Z</fullName>
    </alternativeName>
</protein>